<comment type="function">
    <text evidence="4">Catalyzes the final rate-limiting step of glycolysis by mediating the transfer of a phosphoryl group from phosphoenolpyruvate (PEP) to ADP, generating ATP. The ratio between the highly active tetrameric form and nearly inactive dimeric form determines whether glucose carbons are channeled to biosynthetic processes or used for glycolytic ATP production. The transition between the 2 forms contributes to the control of glycolysis and is important for tumor cell proliferation and survival.</text>
</comment>
<comment type="function">
    <molecule>Isoform M2</molecule>
    <text evidence="4 6">Isoform specifically expressed during embryogenesis that has low pyruvate kinase activity by itself and requires allosteric activation by D-fructose 1,6-bisphosphate (FBP) for pyruvate kinase activity. In addition to its pyruvate kinase activity in the cytoplasm, also acts as a regulator of transcription in the nucleus by acting as a protein kinase. Translocates into the nucleus in response to various signals, such as EGF receptor activation, and homodimerizes, leading to its conversion into a protein threonine- and tyrosine-protein kinase. Catalyzes phosphorylation of STAT3 at 'Tyr-705' and histone H3 at 'Thr-11' (H3T11ph), leading to activate transcription. Its ability to activate transcription plays a role in cancer cells by promoting cell proliferation and promote tumorigenesis (By similarity). Promotes the expression of the immune checkpoint protein CD274 in BMAL1-deficient macrophages. May also act as a translation regulator for a subset of mRNAs, independently of its pyruvate kinase activity: associates with subpools of endoplasmic reticulum-associated ribosomes, binds directly to the mRNAs translated at the endoplasmic reticulum and promotes translation of these endoplasmic reticulum-destined mRNAs (By similarity). Plays a role in caspase independent cell death of tumor cells (By similarity).</text>
</comment>
<comment type="function">
    <molecule>Isoform M1</molecule>
    <text evidence="4">Pyruvate kinase isoform expressed in adult tissues, which replaces isoform M2 after birth. In contrast to isoform M2, has high pyruvate kinase activity by itself and does not require allosteric activation by D-fructose 1,6-bisphosphate (FBP) for activity.</text>
</comment>
<comment type="catalytic activity">
    <molecule>Isoform M2</molecule>
    <reaction evidence="4">
        <text>pyruvate + ATP = phosphoenolpyruvate + ADP + H(+)</text>
        <dbReference type="Rhea" id="RHEA:18157"/>
        <dbReference type="ChEBI" id="CHEBI:15361"/>
        <dbReference type="ChEBI" id="CHEBI:15378"/>
        <dbReference type="ChEBI" id="CHEBI:30616"/>
        <dbReference type="ChEBI" id="CHEBI:58702"/>
        <dbReference type="ChEBI" id="CHEBI:456216"/>
        <dbReference type="EC" id="2.7.1.40"/>
    </reaction>
    <physiologicalReaction direction="right-to-left" evidence="4">
        <dbReference type="Rhea" id="RHEA:18159"/>
    </physiologicalReaction>
</comment>
<comment type="catalytic activity">
    <molecule>Isoform M1</molecule>
    <reaction evidence="4">
        <text>pyruvate + ATP = phosphoenolpyruvate + ADP + H(+)</text>
        <dbReference type="Rhea" id="RHEA:18157"/>
        <dbReference type="ChEBI" id="CHEBI:15361"/>
        <dbReference type="ChEBI" id="CHEBI:15378"/>
        <dbReference type="ChEBI" id="CHEBI:30616"/>
        <dbReference type="ChEBI" id="CHEBI:58702"/>
        <dbReference type="ChEBI" id="CHEBI:456216"/>
        <dbReference type="EC" id="2.7.1.40"/>
    </reaction>
</comment>
<comment type="catalytic activity">
    <molecule>Isoform M2</molecule>
    <reaction evidence="4">
        <text>L-tyrosyl-[protein] + ATP = O-phospho-L-tyrosyl-[protein] + ADP + H(+)</text>
        <dbReference type="Rhea" id="RHEA:10596"/>
        <dbReference type="Rhea" id="RHEA-COMP:10136"/>
        <dbReference type="Rhea" id="RHEA-COMP:20101"/>
        <dbReference type="ChEBI" id="CHEBI:15378"/>
        <dbReference type="ChEBI" id="CHEBI:30616"/>
        <dbReference type="ChEBI" id="CHEBI:46858"/>
        <dbReference type="ChEBI" id="CHEBI:61978"/>
        <dbReference type="ChEBI" id="CHEBI:456216"/>
        <dbReference type="EC" id="2.7.10.2"/>
    </reaction>
    <physiologicalReaction direction="left-to-right" evidence="4">
        <dbReference type="Rhea" id="RHEA:10597"/>
    </physiologicalReaction>
</comment>
<comment type="catalytic activity">
    <molecule>Isoform M2</molecule>
    <reaction evidence="4">
        <text>L-threonyl-[protein] + ATP = O-phospho-L-threonyl-[protein] + ADP + H(+)</text>
        <dbReference type="Rhea" id="RHEA:46608"/>
        <dbReference type="Rhea" id="RHEA-COMP:11060"/>
        <dbReference type="Rhea" id="RHEA-COMP:11605"/>
        <dbReference type="ChEBI" id="CHEBI:15378"/>
        <dbReference type="ChEBI" id="CHEBI:30013"/>
        <dbReference type="ChEBI" id="CHEBI:30616"/>
        <dbReference type="ChEBI" id="CHEBI:61977"/>
        <dbReference type="ChEBI" id="CHEBI:456216"/>
        <dbReference type="EC" id="2.7.11.1"/>
    </reaction>
    <physiologicalReaction direction="left-to-right" evidence="4">
        <dbReference type="Rhea" id="RHEA:46609"/>
    </physiologicalReaction>
</comment>
<comment type="cofactor">
    <cofactor evidence="7">
        <name>Mg(2+)</name>
        <dbReference type="ChEBI" id="CHEBI:18420"/>
    </cofactor>
</comment>
<comment type="cofactor">
    <cofactor evidence="7">
        <name>K(+)</name>
        <dbReference type="ChEBI" id="CHEBI:29103"/>
    </cofactor>
</comment>
<comment type="activity regulation">
    <molecule>Isoform M2</molecule>
    <text evidence="4">Isoform M2 is allosterically activated by D-fructose 1,6-bisphosphate (FBP). Inhibited by oxalate and 3,3',5-triiodo-L-thyronine (T3). The activity of the tetrameric form is inhibited by PML. Selective binding to tyrosine-phosphorylated peptides releases the allosteric activator FBP, leading to inhibition of PKM enzymatic activity, this diverts glucose metabolites from energy production to anabolic processes when cells are stimulated by certain growth factors. Glycolytic flux are highly dependent on de novo biosynthesis of serine and glycine, and serine is a natural ligand and allosteric activator of isoform M2.</text>
</comment>
<comment type="activity regulation">
    <molecule>Isoform M1</molecule>
    <text evidence="4">Has high pyruvate kinase activity by itself and does not require allosteric activation by D-fructose 1,6-bisphosphate (FBP) for activity.</text>
</comment>
<comment type="pathway">
    <text evidence="4">Carbohydrate degradation; glycolysis; pyruvate from D-glyceraldehyde 3-phosphate: step 5/5.</text>
</comment>
<comment type="subunit">
    <molecule>Isoform M2</molecule>
    <text evidence="4">Monomer and homotetramer; exists as a monomer in the absence of D-fructose 1,6-bisphosphate (FBP), and reversibly associates to form a homotetramer in the presence of FBP. The monomeric form binds 3,3',5-triiodo-L-thyronine (T3). Tetramer formation induces pyruvate kinase activity. The tetrameric form has high affinity for the substrate and is associated within the glycolytic enzyme complex. FBP stimulates the formation of tetramers from dimers. Homodimer; exists in a dimeric form in tumor cells and the dimeric form has less affinity for the phosphoenolpyruvate substrate. The homodimer converts into a protein kinase. Interacts with HERC1, POU5F1 and PML. Interacts with EGLN3; the interaction hydroxylates PKM under hypoxia and enhances binding to HIF1A. Interacts with HIF1A; the interaction is enhanced by binding of EGLN3, promoting enhanced transcription activity under hypoxia. Interacts with TRIM35; this interaction prevents FGFR1-dependent tyrosine phosphorylation. Interacts with JMJD8. Interacts with TRAF4. Interacts with (phosphorylated) CTNNB1; leading to activate transcription. Interacts with TSC22D2; the interaction results in reduced nuclear levels of PKM isoform M2, leading to repression of cyclin CCND1 transcription and reduced cell growth (By similarity).</text>
</comment>
<comment type="interaction">
    <interactant intactId="EBI-7133357">
        <id>P11974</id>
    </interactant>
    <interactant intactId="EBI-2750756">
        <id>P00563</id>
        <label>CKM</label>
    </interactant>
    <organismsDiffer>false</organismsDiffer>
    <experiments>2</experiments>
</comment>
<comment type="subcellular location">
    <molecule>Isoform M2</molecule>
    <subcellularLocation>
        <location evidence="4">Cytoplasm</location>
    </subcellularLocation>
    <subcellularLocation>
        <location evidence="4">Nucleus</location>
    </subcellularLocation>
    <text evidence="4">Translocates to the nucleus in response to various signals, such as EGF receptor activation or apoptotic stimuli.</text>
</comment>
<comment type="subcellular location">
    <molecule>Isoform M1</molecule>
    <subcellularLocation>
        <location evidence="4">Cytoplasm</location>
    </subcellularLocation>
</comment>
<comment type="alternative products">
    <event type="alternative splicing"/>
    <isoform>
        <id>P11974-1</id>
        <name>M1</name>
        <name>PKM1</name>
        <sequence type="displayed"/>
    </isoform>
    <isoform>
        <id>P11974-2</id>
        <id>O18919-1</id>
        <name>M2</name>
        <name>PKM2</name>
        <sequence type="described" ref="VSP_011106"/>
    </isoform>
</comment>
<comment type="PTM">
    <text evidence="4">ISGylated.</text>
</comment>
<comment type="PTM">
    <text evidence="4">Under hypoxia, hydroxylated by EGLN3.</text>
</comment>
<comment type="PTM">
    <text evidence="4">Acetylation at Lys-305 is stimulated by high glucose concentration, it decreases enzyme activity and promotes its lysosomal-dependent degradation via chaperone-mediated autophagy.</text>
</comment>
<comment type="PTM">
    <molecule>Isoform M2</molecule>
    <text evidence="4">Acetylated by EP300, leading to impair phosphoenolpyruvate substrate-binding and promote its homodimerization and subsequent translocation to the nucleus. Deacetylation by SIRT6 promotes its nuclear export into the cytoplasm, leading to suppress its nuclear localization and oncogenic function.</text>
</comment>
<comment type="PTM">
    <molecule>Isoform M2</molecule>
    <text evidence="4">S-nitrosylation at Cys-423 and Cys-424 inhibits homotetramerization and pyruvate kinase activity (By similarity). S-nitrosylation is indirectly inhibited by AKR1A1 which degrades S-nitroso-CoA, a cofactor required to S-nitrosylate proteins (By similarity).</text>
</comment>
<comment type="PTM">
    <text evidence="4">FGFR1-dependent tyrosine phosphorylation is reduced by interaction with TRIM35.</text>
</comment>
<comment type="miscellaneous">
    <text evidence="4">There are 4 isozymes of pyruvate kinase in mammals (L, R, M1, M2) encoded by 2 different genes: PKLR and PKM. The L and R isozymes are generated from the PKLR by differential splicing of RNA; the M1 and M2 forms are produced from the PKM gene by differential splicing. L type is major isozyme in the liver, R is found in red cells, M1 is the main form in muscle, heart and brain, and M2 is found in early fetal tissues as well as in most cancer cells.</text>
</comment>
<comment type="similarity">
    <text evidence="9">Belongs to the pyruvate kinase family.</text>
</comment>
<proteinExistence type="evidence at protein level"/>
<evidence type="ECO:0000250" key="1">
    <source>
        <dbReference type="UniProtKB" id="P00549"/>
    </source>
</evidence>
<evidence type="ECO:0000250" key="2">
    <source>
        <dbReference type="UniProtKB" id="P11979"/>
    </source>
</evidence>
<evidence type="ECO:0000250" key="3">
    <source>
        <dbReference type="UniProtKB" id="P11980"/>
    </source>
</evidence>
<evidence type="ECO:0000250" key="4">
    <source>
        <dbReference type="UniProtKB" id="P14618"/>
    </source>
</evidence>
<evidence type="ECO:0000250" key="5">
    <source>
        <dbReference type="UniProtKB" id="P30613"/>
    </source>
</evidence>
<evidence type="ECO:0000250" key="6">
    <source>
        <dbReference type="UniProtKB" id="P52480"/>
    </source>
</evidence>
<evidence type="ECO:0000269" key="7">
    <source>
    </source>
</evidence>
<evidence type="ECO:0000303" key="8">
    <source>
    </source>
</evidence>
<evidence type="ECO:0000305" key="9"/>
<evidence type="ECO:0007829" key="10">
    <source>
        <dbReference type="PDB" id="1A49"/>
    </source>
</evidence>
<evidence type="ECO:0007829" key="11">
    <source>
        <dbReference type="PDB" id="2G50"/>
    </source>
</evidence>
<evidence type="ECO:0007829" key="12">
    <source>
        <dbReference type="PDB" id="3N25"/>
    </source>
</evidence>
<evidence type="ECO:0007829" key="13">
    <source>
        <dbReference type="PDB" id="7R6Y"/>
    </source>
</evidence>
<gene>
    <name type="primary">PKM</name>
</gene>
<feature type="initiator methionine" description="Removed" evidence="2">
    <location>
        <position position="1"/>
    </location>
</feature>
<feature type="chain" id="PRO_0000112091" description="Pyruvate kinase PKM">
    <location>
        <begin position="2"/>
        <end position="531"/>
    </location>
</feature>
<feature type="region of interest" description="Interaction with POU5F1" evidence="4">
    <location>
        <begin position="307"/>
        <end position="531"/>
    </location>
</feature>
<feature type="binding site" evidence="4">
    <location>
        <position position="70"/>
    </location>
    <ligand>
        <name>L-serine</name>
        <dbReference type="ChEBI" id="CHEBI:33384"/>
    </ligand>
</feature>
<feature type="binding site" evidence="5">
    <location>
        <position position="73"/>
    </location>
    <ligand>
        <name>substrate</name>
    </ligand>
</feature>
<feature type="binding site" evidence="4">
    <location>
        <begin position="75"/>
        <end position="78"/>
    </location>
    <ligand>
        <name>ATP</name>
        <dbReference type="ChEBI" id="CHEBI:30616"/>
    </ligand>
</feature>
<feature type="binding site" evidence="4">
    <location>
        <position position="75"/>
    </location>
    <ligand>
        <name>K(+)</name>
        <dbReference type="ChEBI" id="CHEBI:29103"/>
    </ligand>
</feature>
<feature type="binding site" evidence="4">
    <location>
        <position position="77"/>
    </location>
    <ligand>
        <name>K(+)</name>
        <dbReference type="ChEBI" id="CHEBI:29103"/>
    </ligand>
</feature>
<feature type="binding site" evidence="4">
    <location>
        <position position="106"/>
    </location>
    <ligand>
        <name>L-serine</name>
        <dbReference type="ChEBI" id="CHEBI:33384"/>
    </ligand>
</feature>
<feature type="binding site" evidence="4">
    <location>
        <position position="113"/>
    </location>
    <ligand>
        <name>K(+)</name>
        <dbReference type="ChEBI" id="CHEBI:29103"/>
    </ligand>
</feature>
<feature type="binding site" evidence="4">
    <location>
        <position position="114"/>
    </location>
    <ligand>
        <name>K(+)</name>
        <dbReference type="ChEBI" id="CHEBI:29103"/>
    </ligand>
</feature>
<feature type="binding site" evidence="4">
    <location>
        <position position="120"/>
    </location>
    <ligand>
        <name>ATP</name>
        <dbReference type="ChEBI" id="CHEBI:30616"/>
    </ligand>
</feature>
<feature type="binding site" evidence="4">
    <location>
        <position position="207"/>
    </location>
    <ligand>
        <name>ATP</name>
        <dbReference type="ChEBI" id="CHEBI:30616"/>
    </ligand>
</feature>
<feature type="binding site" evidence="5">
    <location>
        <position position="270"/>
    </location>
    <ligand>
        <name>substrate</name>
    </ligand>
</feature>
<feature type="binding site" evidence="4">
    <location>
        <position position="272"/>
    </location>
    <ligand>
        <name>Mg(2+)</name>
        <dbReference type="ChEBI" id="CHEBI:18420"/>
    </ligand>
</feature>
<feature type="binding site" evidence="5">
    <location>
        <position position="295"/>
    </location>
    <ligand>
        <name>substrate</name>
    </ligand>
</feature>
<feature type="binding site" evidence="4">
    <location>
        <position position="296"/>
    </location>
    <ligand>
        <name>Mg(2+)</name>
        <dbReference type="ChEBI" id="CHEBI:18420"/>
    </ligand>
</feature>
<feature type="binding site" evidence="5">
    <location>
        <position position="296"/>
    </location>
    <ligand>
        <name>substrate</name>
    </ligand>
</feature>
<feature type="binding site" evidence="5">
    <location>
        <position position="328"/>
    </location>
    <ligand>
        <name>substrate</name>
    </ligand>
</feature>
<feature type="binding site" evidence="4">
    <location>
        <begin position="432"/>
        <end position="437"/>
    </location>
    <ligand>
        <name>beta-D-fructose 1,6-bisphosphate</name>
        <dbReference type="ChEBI" id="CHEBI:32966"/>
        <note>allosteric activator</note>
    </ligand>
</feature>
<feature type="binding site" evidence="4">
    <location>
        <position position="464"/>
    </location>
    <ligand>
        <name>L-serine</name>
        <dbReference type="ChEBI" id="CHEBI:33384"/>
    </ligand>
</feature>
<feature type="binding site" evidence="4">
    <location>
        <position position="482"/>
    </location>
    <ligand>
        <name>beta-D-fructose 1,6-bisphosphate</name>
        <dbReference type="ChEBI" id="CHEBI:32966"/>
        <note>allosteric activator</note>
    </ligand>
</feature>
<feature type="binding site" evidence="4">
    <location>
        <position position="489"/>
    </location>
    <ligand>
        <name>beta-D-fructose 1,6-bisphosphate</name>
        <dbReference type="ChEBI" id="CHEBI:32966"/>
        <note>allosteric activator</note>
    </ligand>
</feature>
<feature type="binding site" evidence="4">
    <location>
        <begin position="516"/>
        <end position="521"/>
    </location>
    <ligand>
        <name>beta-D-fructose 1,6-bisphosphate</name>
        <dbReference type="ChEBI" id="CHEBI:32966"/>
        <note>allosteric activator</note>
    </ligand>
</feature>
<feature type="site" description="Transition state stabilizer" evidence="1">
    <location>
        <position position="270"/>
    </location>
</feature>
<feature type="modified residue" description="N-acetylserine" evidence="2">
    <location>
        <position position="2"/>
    </location>
</feature>
<feature type="modified residue" description="N6,N6,N6-trimethyllysine" evidence="4">
    <location>
        <position position="3"/>
    </location>
</feature>
<feature type="modified residue" description="Phosphoserine" evidence="4">
    <location>
        <position position="37"/>
    </location>
</feature>
<feature type="modified residue" description="Phosphothreonine" evidence="4">
    <location>
        <position position="41"/>
    </location>
</feature>
<feature type="modified residue" description="N6-acetyllysine" evidence="4">
    <location>
        <position position="62"/>
    </location>
</feature>
<feature type="modified residue" description="N6-succinyllysine" evidence="6">
    <location>
        <position position="66"/>
    </location>
</feature>
<feature type="modified residue" description="N6-acetyllysine" evidence="4">
    <location>
        <position position="89"/>
    </location>
</feature>
<feature type="modified residue" description="Phosphoserine" evidence="3">
    <location>
        <position position="97"/>
    </location>
</feature>
<feature type="modified residue" description="Phosphoserine" evidence="3">
    <location>
        <position position="100"/>
    </location>
</feature>
<feature type="modified residue" description="Phosphotyrosine" evidence="4">
    <location>
        <position position="105"/>
    </location>
</feature>
<feature type="modified residue" description="Phosphoserine" evidence="4">
    <location>
        <position position="127"/>
    </location>
</feature>
<feature type="modified residue" description="Phosphotyrosine" evidence="6">
    <location>
        <position position="148"/>
    </location>
</feature>
<feature type="modified residue" description="N6-acetyllysine; alternate" evidence="4">
    <location>
        <position position="166"/>
    </location>
</feature>
<feature type="modified residue" description="N6-succinyllysine; alternate" evidence="6">
    <location>
        <position position="166"/>
    </location>
</feature>
<feature type="modified residue" description="Phosphotyrosine" evidence="4">
    <location>
        <position position="175"/>
    </location>
</feature>
<feature type="modified residue" description="Phosphothreonine" evidence="4">
    <location>
        <position position="195"/>
    </location>
</feature>
<feature type="modified residue" description="N6-acetyllysine; alternate" evidence="4">
    <location>
        <position position="266"/>
    </location>
</feature>
<feature type="modified residue" description="N6-acetyllysine; alternate" evidence="6">
    <location>
        <position position="270"/>
    </location>
</feature>
<feature type="modified residue" description="N6-acetyllysine" evidence="4">
    <location>
        <position position="305"/>
    </location>
</feature>
<feature type="modified residue" description="N6-acetyllysine; alternate" evidence="6">
    <location>
        <position position="322"/>
    </location>
</feature>
<feature type="modified residue" description="N6-succinyllysine; alternate" evidence="6">
    <location>
        <position position="322"/>
    </location>
</feature>
<feature type="modified residue" description="N6-acetyllysine" evidence="6">
    <location>
        <position position="475"/>
    </location>
</feature>
<feature type="modified residue" description="N6-succinyllysine" evidence="6">
    <location>
        <position position="498"/>
    </location>
</feature>
<feature type="cross-link" description="Glycyl lysine isopeptide (Lys-Gly) (interchain with G-Cter in SUMO2)" evidence="4">
    <location>
        <position position="115"/>
    </location>
</feature>
<feature type="cross-link" description="Glycyl lysine isopeptide (Lys-Gly) (interchain with G-Cter in SUMO1); alternate" evidence="4">
    <location>
        <position position="166"/>
    </location>
</feature>
<feature type="cross-link" description="Glycyl lysine isopeptide (Lys-Gly) (interchain with G-Cter in SUMO2); alternate" evidence="4">
    <location>
        <position position="266"/>
    </location>
</feature>
<feature type="cross-link" description="Glycyl lysine isopeptide (Lys-Gly) (interchain with G-Cter in SUMO2); alternate" evidence="4">
    <location>
        <position position="270"/>
    </location>
</feature>
<feature type="splice variant" id="VSP_011106" description="In isoform M2." evidence="8">
    <original>MFHRKLFEELARSSSHSTDLMEAMAMGSVEASYKCLAAALIVLTE</original>
    <variation>IYHLQLFEELRRLAPITSDPTEAAAVGAVEASFKCCSGAIIVLTK</variation>
    <location>
        <begin position="389"/>
        <end position="433"/>
    </location>
</feature>
<feature type="sequence conflict" description="In Ref. 3; AAC48536." evidence="9" ref="3">
    <original>S</original>
    <variation>A</variation>
    <location>
        <position position="401"/>
    </location>
</feature>
<feature type="helix" evidence="11">
    <location>
        <begin position="18"/>
        <end position="21"/>
    </location>
</feature>
<feature type="helix" evidence="11">
    <location>
        <begin position="26"/>
        <end position="31"/>
    </location>
</feature>
<feature type="strand" evidence="11">
    <location>
        <begin position="45"/>
        <end position="50"/>
    </location>
</feature>
<feature type="turn" evidence="11">
    <location>
        <begin position="53"/>
        <end position="55"/>
    </location>
</feature>
<feature type="helix" evidence="11">
    <location>
        <begin position="58"/>
        <end position="67"/>
    </location>
</feature>
<feature type="strand" evidence="11">
    <location>
        <begin position="71"/>
        <end position="75"/>
    </location>
</feature>
<feature type="helix" evidence="11">
    <location>
        <begin position="81"/>
        <end position="96"/>
    </location>
</feature>
<feature type="turn" evidence="11">
    <location>
        <begin position="97"/>
        <end position="100"/>
    </location>
</feature>
<feature type="turn" evidence="11">
    <location>
        <begin position="102"/>
        <end position="104"/>
    </location>
</feature>
<feature type="strand" evidence="11">
    <location>
        <begin position="109"/>
        <end position="113"/>
    </location>
</feature>
<feature type="strand" evidence="11">
    <location>
        <begin position="119"/>
        <end position="121"/>
    </location>
</feature>
<feature type="strand" evidence="11">
    <location>
        <begin position="126"/>
        <end position="128"/>
    </location>
</feature>
<feature type="strand" evidence="11">
    <location>
        <begin position="130"/>
        <end position="134"/>
    </location>
</feature>
<feature type="strand" evidence="11">
    <location>
        <begin position="139"/>
        <end position="143"/>
    </location>
</feature>
<feature type="helix" evidence="11">
    <location>
        <begin position="146"/>
        <end position="148"/>
    </location>
</feature>
<feature type="strand" evidence="11">
    <location>
        <begin position="154"/>
        <end position="160"/>
    </location>
</feature>
<feature type="helix" evidence="11">
    <location>
        <begin position="164"/>
        <end position="167"/>
    </location>
</feature>
<feature type="strand" evidence="11">
    <location>
        <begin position="173"/>
        <end position="176"/>
    </location>
</feature>
<feature type="turn" evidence="11">
    <location>
        <begin position="177"/>
        <end position="180"/>
    </location>
</feature>
<feature type="strand" evidence="11">
    <location>
        <begin position="181"/>
        <end position="189"/>
    </location>
</feature>
<feature type="strand" evidence="11">
    <location>
        <begin position="192"/>
        <end position="199"/>
    </location>
</feature>
<feature type="strand" evidence="11">
    <location>
        <begin position="201"/>
        <end position="203"/>
    </location>
</feature>
<feature type="strand" evidence="11">
    <location>
        <begin position="208"/>
        <end position="210"/>
    </location>
</feature>
<feature type="strand" evidence="12">
    <location>
        <begin position="212"/>
        <end position="214"/>
    </location>
</feature>
<feature type="helix" evidence="11">
    <location>
        <begin position="223"/>
        <end position="234"/>
    </location>
</feature>
<feature type="strand" evidence="11">
    <location>
        <begin position="238"/>
        <end position="242"/>
    </location>
</feature>
<feature type="helix" evidence="11">
    <location>
        <begin position="248"/>
        <end position="258"/>
    </location>
</feature>
<feature type="turn" evidence="11">
    <location>
        <begin position="259"/>
        <end position="264"/>
    </location>
</feature>
<feature type="strand" evidence="11">
    <location>
        <begin position="265"/>
        <end position="271"/>
    </location>
</feature>
<feature type="helix" evidence="11">
    <location>
        <begin position="274"/>
        <end position="278"/>
    </location>
</feature>
<feature type="helix" evidence="11">
    <location>
        <begin position="280"/>
        <end position="286"/>
    </location>
</feature>
<feature type="strand" evidence="11">
    <location>
        <begin position="287"/>
        <end position="293"/>
    </location>
</feature>
<feature type="helix" evidence="11">
    <location>
        <begin position="294"/>
        <end position="300"/>
    </location>
</feature>
<feature type="helix" evidence="11">
    <location>
        <begin position="303"/>
        <end position="305"/>
    </location>
</feature>
<feature type="helix" evidence="11">
    <location>
        <begin position="306"/>
        <end position="320"/>
    </location>
</feature>
<feature type="strand" evidence="11">
    <location>
        <begin position="324"/>
        <end position="329"/>
    </location>
</feature>
<feature type="helix" evidence="11">
    <location>
        <begin position="332"/>
        <end position="335"/>
    </location>
</feature>
<feature type="strand" evidence="13">
    <location>
        <begin position="337"/>
        <end position="339"/>
    </location>
</feature>
<feature type="helix" evidence="11">
    <location>
        <begin position="342"/>
        <end position="354"/>
    </location>
</feature>
<feature type="strand" evidence="11">
    <location>
        <begin position="357"/>
        <end position="362"/>
    </location>
</feature>
<feature type="helix" evidence="11">
    <location>
        <begin position="363"/>
        <end position="366"/>
    </location>
</feature>
<feature type="helix" evidence="11">
    <location>
        <begin position="371"/>
        <end position="387"/>
    </location>
</feature>
<feature type="helix" evidence="11">
    <location>
        <begin position="391"/>
        <end position="401"/>
    </location>
</feature>
<feature type="turn" evidence="11">
    <location>
        <begin position="402"/>
        <end position="404"/>
    </location>
</feature>
<feature type="helix" evidence="11">
    <location>
        <begin position="408"/>
        <end position="423"/>
    </location>
</feature>
<feature type="strand" evidence="11">
    <location>
        <begin position="428"/>
        <end position="431"/>
    </location>
</feature>
<feature type="strand" evidence="11">
    <location>
        <begin position="433"/>
        <end position="435"/>
    </location>
</feature>
<feature type="helix" evidence="11">
    <location>
        <begin position="436"/>
        <end position="443"/>
    </location>
</feature>
<feature type="strand" evidence="11">
    <location>
        <begin position="450"/>
        <end position="455"/>
    </location>
</feature>
<feature type="helix" evidence="11">
    <location>
        <begin position="457"/>
        <end position="462"/>
    </location>
</feature>
<feature type="helix" evidence="11">
    <location>
        <begin position="463"/>
        <end position="465"/>
    </location>
</feature>
<feature type="strand" evidence="11">
    <location>
        <begin position="469"/>
        <end position="473"/>
    </location>
</feature>
<feature type="helix" evidence="11">
    <location>
        <begin position="482"/>
        <end position="499"/>
    </location>
</feature>
<feature type="strand" evidence="11">
    <location>
        <begin position="508"/>
        <end position="513"/>
    </location>
</feature>
<feature type="strand" evidence="10">
    <location>
        <begin position="515"/>
        <end position="518"/>
    </location>
</feature>
<feature type="strand" evidence="11">
    <location>
        <begin position="524"/>
        <end position="529"/>
    </location>
</feature>
<feature type="modified residue" description="S-nitrosocysteine" evidence="4">
    <location sequence="P11974-2">
        <position position="423"/>
    </location>
</feature>
<feature type="modified residue" description="S-nitrosocysteine" evidence="4">
    <location sequence="P11974-2">
        <position position="424"/>
    </location>
</feature>
<accession>P11974</accession>
<accession>O18919</accession>
<accession>Q29501</accession>
<dbReference type="EC" id="2.7.1.40" evidence="4"/>
<dbReference type="EC" id="2.7.11.1" evidence="4"/>
<dbReference type="EC" id="2.7.10.2" evidence="4"/>
<dbReference type="EMBL" id="U09028">
    <property type="protein sequence ID" value="AAB61963.1"/>
    <property type="molecule type" value="mRNA"/>
</dbReference>
<dbReference type="EMBL" id="U44751">
    <property type="protein sequence ID" value="AAC48536.1"/>
    <property type="molecule type" value="mRNA"/>
</dbReference>
<dbReference type="EMBL" id="AF032389">
    <property type="protein sequence ID" value="AAB86587.1"/>
    <property type="molecule type" value="mRNA"/>
</dbReference>
<dbReference type="PIR" id="A28506">
    <property type="entry name" value="A28506"/>
</dbReference>
<dbReference type="PIR" id="A54113">
    <property type="entry name" value="A54113"/>
</dbReference>
<dbReference type="RefSeq" id="NP_001182573.1">
    <property type="nucleotide sequence ID" value="NM_001195644.1"/>
</dbReference>
<dbReference type="RefSeq" id="NP_001182574.1">
    <molecule id="P11974-2"/>
    <property type="nucleotide sequence ID" value="NM_001195645.1"/>
</dbReference>
<dbReference type="RefSeq" id="XP_069909300.1">
    <molecule id="P11974-2"/>
    <property type="nucleotide sequence ID" value="XM_070053199.1"/>
</dbReference>
<dbReference type="RefSeq" id="XP_069909303.1">
    <molecule id="P11974-2"/>
    <property type="nucleotide sequence ID" value="XM_070053202.1"/>
</dbReference>
<dbReference type="PDB" id="1A49">
    <property type="method" value="X-ray"/>
    <property type="resolution" value="2.10 A"/>
    <property type="chains" value="A/B/C/D/E/F/G/H=2-531"/>
</dbReference>
<dbReference type="PDB" id="1A5U">
    <property type="method" value="X-ray"/>
    <property type="resolution" value="2.35 A"/>
    <property type="chains" value="A/B/C/D/E/F/G/H=2-531"/>
</dbReference>
<dbReference type="PDB" id="1AQF">
    <property type="method" value="X-ray"/>
    <property type="resolution" value="2.70 A"/>
    <property type="chains" value="A/B/C/D/E/F/G/H=2-531"/>
</dbReference>
<dbReference type="PDB" id="1F3W">
    <property type="method" value="X-ray"/>
    <property type="resolution" value="3.00 A"/>
    <property type="chains" value="A/B/C/D/E/F/G/H=2-531"/>
</dbReference>
<dbReference type="PDB" id="1F3X">
    <property type="method" value="X-ray"/>
    <property type="resolution" value="2.80 A"/>
    <property type="chains" value="A/B/C/D/E/F/G/H=2-531"/>
</dbReference>
<dbReference type="PDB" id="1PKN">
    <property type="method" value="X-ray"/>
    <property type="resolution" value="2.90 A"/>
    <property type="chains" value="A=2-531"/>
</dbReference>
<dbReference type="PDB" id="2G50">
    <property type="method" value="X-ray"/>
    <property type="resolution" value="1.65 A"/>
    <property type="chains" value="A/B/C/D/E/F/G/H=2-531"/>
</dbReference>
<dbReference type="PDB" id="3N25">
    <property type="method" value="X-ray"/>
    <property type="resolution" value="2.41 A"/>
    <property type="chains" value="A/B/C/D/E/F/G/H=1-531"/>
</dbReference>
<dbReference type="PDB" id="7R6Y">
    <property type="method" value="X-ray"/>
    <property type="resolution" value="2.25 A"/>
    <property type="chains" value="A/B/C/D=1-531"/>
</dbReference>
<dbReference type="PDB" id="8F5T">
    <property type="method" value="X-ray"/>
    <property type="resolution" value="2.41 A"/>
    <property type="chains" value="A/B/C/D/E/F/G/H=1-531"/>
</dbReference>
<dbReference type="PDB" id="8F5U">
    <property type="method" value="X-ray"/>
    <property type="resolution" value="2.30 A"/>
    <property type="chains" value="A/B/C/D=1-531"/>
</dbReference>
<dbReference type="PDB" id="8F6M">
    <property type="method" value="X-ray"/>
    <property type="resolution" value="2.15 A"/>
    <property type="chains" value="A/B/C/D/E/F/G/H=1-531"/>
</dbReference>
<dbReference type="PDBsum" id="1A49"/>
<dbReference type="PDBsum" id="1A5U"/>
<dbReference type="PDBsum" id="1AQF"/>
<dbReference type="PDBsum" id="1F3W"/>
<dbReference type="PDBsum" id="1F3X"/>
<dbReference type="PDBsum" id="1PKN"/>
<dbReference type="PDBsum" id="2G50"/>
<dbReference type="PDBsum" id="3N25"/>
<dbReference type="PDBsum" id="7R6Y"/>
<dbReference type="PDBsum" id="8F5T"/>
<dbReference type="PDBsum" id="8F5U"/>
<dbReference type="PDBsum" id="8F6M"/>
<dbReference type="PCDDB" id="P11974"/>
<dbReference type="SMR" id="P11974"/>
<dbReference type="BioGRID" id="1171699">
    <property type="interactions" value="1"/>
</dbReference>
<dbReference type="DIP" id="DIP-47514N"/>
<dbReference type="FunCoup" id="P11974">
    <property type="interactions" value="809"/>
</dbReference>
<dbReference type="IntAct" id="P11974">
    <property type="interactions" value="1"/>
</dbReference>
<dbReference type="MINT" id="P11974"/>
<dbReference type="STRING" id="9986.ENSOCUP00000005301"/>
<dbReference type="ChEMBL" id="CHEMBL5637"/>
<dbReference type="PaxDb" id="9986-ENSOCUP00000005301"/>
<dbReference type="GeneID" id="100008676"/>
<dbReference type="KEGG" id="ocu:100008676"/>
<dbReference type="CTD" id="5315"/>
<dbReference type="eggNOG" id="KOG2323">
    <property type="taxonomic scope" value="Eukaryota"/>
</dbReference>
<dbReference type="InParanoid" id="P11974"/>
<dbReference type="OrthoDB" id="108365at2759"/>
<dbReference type="BRENDA" id="2.7.1.40">
    <property type="organism ID" value="1749"/>
</dbReference>
<dbReference type="SABIO-RK" id="P11974"/>
<dbReference type="UniPathway" id="UPA00109">
    <property type="reaction ID" value="UER00188"/>
</dbReference>
<dbReference type="EvolutionaryTrace" id="P11974"/>
<dbReference type="Proteomes" id="UP000001811">
    <property type="component" value="Unplaced"/>
</dbReference>
<dbReference type="GO" id="GO:0005634">
    <property type="term" value="C:nucleus"/>
    <property type="evidence" value="ECO:0007669"/>
    <property type="project" value="UniProtKB-SubCell"/>
</dbReference>
<dbReference type="GO" id="GO:0005791">
    <property type="term" value="C:rough endoplasmic reticulum"/>
    <property type="evidence" value="ECO:0000250"/>
    <property type="project" value="UniProtKB"/>
</dbReference>
<dbReference type="GO" id="GO:0005524">
    <property type="term" value="F:ATP binding"/>
    <property type="evidence" value="ECO:0007669"/>
    <property type="project" value="UniProtKB-KW"/>
</dbReference>
<dbReference type="GO" id="GO:0000287">
    <property type="term" value="F:magnesium ion binding"/>
    <property type="evidence" value="ECO:0007669"/>
    <property type="project" value="InterPro"/>
</dbReference>
<dbReference type="GO" id="GO:0003729">
    <property type="term" value="F:mRNA binding"/>
    <property type="evidence" value="ECO:0000250"/>
    <property type="project" value="UniProtKB"/>
</dbReference>
<dbReference type="GO" id="GO:0030955">
    <property type="term" value="F:potassium ion binding"/>
    <property type="evidence" value="ECO:0007669"/>
    <property type="project" value="InterPro"/>
</dbReference>
<dbReference type="GO" id="GO:0004713">
    <property type="term" value="F:protein tyrosine kinase activity"/>
    <property type="evidence" value="ECO:0007669"/>
    <property type="project" value="RHEA"/>
</dbReference>
<dbReference type="GO" id="GO:0004743">
    <property type="term" value="F:pyruvate kinase activity"/>
    <property type="evidence" value="ECO:0007669"/>
    <property type="project" value="UniProtKB-EC"/>
</dbReference>
<dbReference type="GO" id="GO:2000767">
    <property type="term" value="P:positive regulation of cytoplasmic translation"/>
    <property type="evidence" value="ECO:0000250"/>
    <property type="project" value="UniProtKB"/>
</dbReference>
<dbReference type="GO" id="GO:1903672">
    <property type="term" value="P:positive regulation of sprouting angiogenesis"/>
    <property type="evidence" value="ECO:0000250"/>
    <property type="project" value="UniProtKB"/>
</dbReference>
<dbReference type="CDD" id="cd00288">
    <property type="entry name" value="Pyruvate_Kinase"/>
    <property type="match status" value="1"/>
</dbReference>
<dbReference type="FunFam" id="3.20.20.60:FF:000025">
    <property type="entry name" value="Pyruvate kinase"/>
    <property type="match status" value="1"/>
</dbReference>
<dbReference type="FunFam" id="3.40.1380.20:FF:000001">
    <property type="entry name" value="Pyruvate kinase"/>
    <property type="match status" value="1"/>
</dbReference>
<dbReference type="FunFam" id="3.40.1380.20:FF:000002">
    <property type="entry name" value="Pyruvate kinase"/>
    <property type="match status" value="1"/>
</dbReference>
<dbReference type="FunFam" id="2.40.33.10:FF:000023">
    <property type="entry name" value="Pyruvate kinase PKM"/>
    <property type="match status" value="1"/>
</dbReference>
<dbReference type="Gene3D" id="3.20.20.60">
    <property type="entry name" value="Phosphoenolpyruvate-binding domains"/>
    <property type="match status" value="1"/>
</dbReference>
<dbReference type="Gene3D" id="2.40.33.10">
    <property type="entry name" value="PK beta-barrel domain-like"/>
    <property type="match status" value="1"/>
</dbReference>
<dbReference type="Gene3D" id="3.40.1380.20">
    <property type="entry name" value="Pyruvate kinase, C-terminal domain"/>
    <property type="match status" value="2"/>
</dbReference>
<dbReference type="InterPro" id="IPR001697">
    <property type="entry name" value="Pyr_Knase"/>
</dbReference>
<dbReference type="InterPro" id="IPR015813">
    <property type="entry name" value="Pyrv/PenolPyrv_kinase-like_dom"/>
</dbReference>
<dbReference type="InterPro" id="IPR040442">
    <property type="entry name" value="Pyrv_kinase-like_dom_sf"/>
</dbReference>
<dbReference type="InterPro" id="IPR011037">
    <property type="entry name" value="Pyrv_Knase-like_insert_dom_sf"/>
</dbReference>
<dbReference type="InterPro" id="IPR018209">
    <property type="entry name" value="Pyrv_Knase_AS"/>
</dbReference>
<dbReference type="InterPro" id="IPR015793">
    <property type="entry name" value="Pyrv_Knase_brl"/>
</dbReference>
<dbReference type="InterPro" id="IPR015795">
    <property type="entry name" value="Pyrv_Knase_C"/>
</dbReference>
<dbReference type="InterPro" id="IPR036918">
    <property type="entry name" value="Pyrv_Knase_C_sf"/>
</dbReference>
<dbReference type="InterPro" id="IPR015806">
    <property type="entry name" value="Pyrv_Knase_insert_dom_sf"/>
</dbReference>
<dbReference type="NCBIfam" id="NF004491">
    <property type="entry name" value="PRK05826.1"/>
    <property type="match status" value="1"/>
</dbReference>
<dbReference type="NCBIfam" id="NF004978">
    <property type="entry name" value="PRK06354.1"/>
    <property type="match status" value="1"/>
</dbReference>
<dbReference type="NCBIfam" id="TIGR01064">
    <property type="entry name" value="pyruv_kin"/>
    <property type="match status" value="1"/>
</dbReference>
<dbReference type="PANTHER" id="PTHR11817">
    <property type="entry name" value="PYRUVATE KINASE"/>
    <property type="match status" value="1"/>
</dbReference>
<dbReference type="Pfam" id="PF00224">
    <property type="entry name" value="PK"/>
    <property type="match status" value="1"/>
</dbReference>
<dbReference type="Pfam" id="PF02887">
    <property type="entry name" value="PK_C"/>
    <property type="match status" value="1"/>
</dbReference>
<dbReference type="PRINTS" id="PR01050">
    <property type="entry name" value="PYRUVTKNASE"/>
</dbReference>
<dbReference type="SUPFAM" id="SSF51621">
    <property type="entry name" value="Phosphoenolpyruvate/pyruvate domain"/>
    <property type="match status" value="1"/>
</dbReference>
<dbReference type="SUPFAM" id="SSF50800">
    <property type="entry name" value="PK beta-barrel domain-like"/>
    <property type="match status" value="1"/>
</dbReference>
<dbReference type="SUPFAM" id="SSF52935">
    <property type="entry name" value="PK C-terminal domain-like"/>
    <property type="match status" value="1"/>
</dbReference>
<dbReference type="PROSITE" id="PS00110">
    <property type="entry name" value="PYRUVATE_KINASE"/>
    <property type="match status" value="1"/>
</dbReference>
<organism>
    <name type="scientific">Oryctolagus cuniculus</name>
    <name type="common">Rabbit</name>
    <dbReference type="NCBI Taxonomy" id="9986"/>
    <lineage>
        <taxon>Eukaryota</taxon>
        <taxon>Metazoa</taxon>
        <taxon>Chordata</taxon>
        <taxon>Craniata</taxon>
        <taxon>Vertebrata</taxon>
        <taxon>Euteleostomi</taxon>
        <taxon>Mammalia</taxon>
        <taxon>Eutheria</taxon>
        <taxon>Euarchontoglires</taxon>
        <taxon>Glires</taxon>
        <taxon>Lagomorpha</taxon>
        <taxon>Leporidae</taxon>
        <taxon>Oryctolagus</taxon>
    </lineage>
</organism>
<sequence>MSKSHSEAGSAFIQTQQLHAAMADTFLEHMCRLDIDSAPITARNTGIICTIGPASRSVETLKEMIKSGMNVARMNFSHGTHEYHAETIKNVRTATESFASDPILYRPVAVALDTKGPEIRTGLIKGSGTAEVELKKGATLKITLDNAYMEKCDENILWLDYKNICKVVDVGSKVYVDDGLISLQVKQKGPDFLVTEVENGGFLGSKKGVNLPGAAVDLPAVSEKDIQDLKFGVEQDVDMVFASFIRKAADVHEVRKILGEKGKNIKIISKIENHEGVRRFDEILEASDGIMVARGDLGIEIPAEKVFLAQKMIIGRCNRAGKPVICATQMLESMIKKPRPTRAEGSDVANAVLDGADCIMLSGETAKGDYPLEAVRMQHLIAREAEAAMFHRKLFEELARSSSHSTDLMEAMAMGSVEASYKCLAAALIVLTESGRSAHQVARYRPRAPIIAVTRNHQTARQAHLYRGIFPVVCKDPVQEAWAEDVDLRVNLAMNVGKARGFFKKGDVVIVLTGWRPGSGFTNTMRVVPVP</sequence>
<name>KPYM_RABIT</name>
<reference key="1">
    <citation type="journal article" date="1994" name="Biochemistry">
        <title>Structure of rabbit muscle pyruvate kinase complexed with Mn2+, K+, and pyruvate.</title>
        <authorList>
            <person name="Larsen T.M."/>
            <person name="Laughlin L.T."/>
            <person name="Holden H.M."/>
            <person name="Rayment I."/>
            <person name="Reed G.H."/>
        </authorList>
    </citation>
    <scope>NUCLEOTIDE SEQUENCE [MRNA] (ISOFORM M1)</scope>
    <scope>X-RAY CRYSTALLOGRAPHY (2.9 ANGSTROMS) IN COMPLEX WITH MANGANESE AND POTASSIUM IONS AND PYRUVATE</scope>
    <source>
        <tissue>Skeletal muscle</tissue>
    </source>
</reference>
<reference key="2">
    <citation type="submission" date="1997-07" db="EMBL/GenBank/DDBJ databases">
        <authorList>
            <person name="Laughlin L.T."/>
        </authorList>
    </citation>
    <scope>SEQUENCE REVISION TO 234-235</scope>
</reference>
<reference key="3">
    <citation type="journal article" date="1996" name="J. Biol. Chem.">
        <title>Effects of conserved residues on the regulation of rabbit muscle pyruvate kinase.</title>
        <authorList>
            <person name="Cheng X."/>
            <person name="Friesen R.H.E."/>
            <person name="Lee J.C."/>
        </authorList>
    </citation>
    <scope>NUCLEOTIDE SEQUENCE [MRNA] (ISOFORM M1)</scope>
</reference>
<reference key="4">
    <citation type="journal article" date="1998" name="Biochemistry">
        <title>Interfacial communications in recombinant rabbit kidney pyruvate kinase.</title>
        <authorList>
            <person name="Friesen R.H.E."/>
            <person name="Chin A.J."/>
            <person name="Ledman D.W."/>
            <person name="Lee J.C."/>
        </authorList>
    </citation>
    <scope>NUCLEOTIDE SEQUENCE [MRNA] (ISOFORM M2)</scope>
    <source>
        <tissue>Kidney</tissue>
    </source>
</reference>
<reference key="5">
    <citation type="journal article" date="1987" name="Arch. Biochem. Biophys.">
        <title>Isolation and sequence determination of an active site peptide of rabbit muscle pyruvate kinase.</title>
        <authorList>
            <person name="Bezares G."/>
            <person name="Eyzaguirre J."/>
            <person name="Hinrichs M.V."/>
            <person name="Heinrikson R.L."/>
            <person name="Reardon I."/>
            <person name="Kemp R.G."/>
            <person name="Latshaw S.P."/>
            <person name="Bazaes S."/>
        </authorList>
    </citation>
    <scope>PROTEIN SEQUENCE OF 343-376</scope>
</reference>
<reference key="6">
    <citation type="journal article" date="1997" name="Arch. Biochem. Biophys.">
        <title>Ligand-induced domain movement in pyruvate kinase: structure of the enzyme from rabbit muscle with Mg2+, K+, and L-phospholactate at 2.7-A resolution.</title>
        <authorList>
            <person name="Larsen T.M."/>
            <person name="Benning M.M."/>
            <person name="Wesenberg G.E."/>
            <person name="Rayment I."/>
            <person name="Reed G.H."/>
        </authorList>
    </citation>
    <scope>X-RAY CRYSTALLOGRAPHY (2.7 ANGSTROMS) IN COMPLEX WITH L-PHOSPHOLACTATE</scope>
    <scope>MAGNESIUM AND POTASSIUM IONS</scope>
    <source>
        <tissue>Skeletal muscle</tissue>
    </source>
</reference>
<reference key="7">
    <citation type="journal article" date="1998" name="Biochemistry">
        <title>Structure of the bis(Mg2+)-ATP-oxalate complex of the rabbit muscle pyruvate kinase at 2.1 A resolution: ATP binding over a barrel.</title>
        <authorList>
            <person name="Larsen T.M."/>
            <person name="Benning M.M."/>
            <person name="Rayment I."/>
            <person name="Reed G.H."/>
        </authorList>
    </citation>
    <scope>X-RAY CRYSTALLOGRAPHY (2.35 ANGSTROMS) IN COMPLEX WITH OXYLATE AND MAGNESIUM IONS</scope>
    <source>
        <tissue>Skeletal muscle</tissue>
    </source>
</reference>
<keyword id="KW-0002">3D-structure</keyword>
<keyword id="KW-0007">Acetylation</keyword>
<keyword id="KW-0021">Allosteric enzyme</keyword>
<keyword id="KW-0025">Alternative splicing</keyword>
<keyword id="KW-0067">ATP-binding</keyword>
<keyword id="KW-0963">Cytoplasm</keyword>
<keyword id="KW-0903">Direct protein sequencing</keyword>
<keyword id="KW-0324">Glycolysis</keyword>
<keyword id="KW-1017">Isopeptide bond</keyword>
<keyword id="KW-0418">Kinase</keyword>
<keyword id="KW-0460">Magnesium</keyword>
<keyword id="KW-0479">Metal-binding</keyword>
<keyword id="KW-0488">Methylation</keyword>
<keyword id="KW-0547">Nucleotide-binding</keyword>
<keyword id="KW-0539">Nucleus</keyword>
<keyword id="KW-0597">Phosphoprotein</keyword>
<keyword id="KW-0630">Potassium</keyword>
<keyword id="KW-0670">Pyruvate</keyword>
<keyword id="KW-1185">Reference proteome</keyword>
<keyword id="KW-0702">S-nitrosylation</keyword>
<keyword id="KW-0808">Transferase</keyword>
<keyword id="KW-0810">Translation regulation</keyword>
<keyword id="KW-0832">Ubl conjugation</keyword>
<protein>
    <recommendedName>
        <fullName>Pyruvate kinase PKM</fullName>
        <ecNumber evidence="4">2.7.1.40</ecNumber>
    </recommendedName>
    <alternativeName>
        <fullName>Pyruvate kinase muscle isozyme</fullName>
    </alternativeName>
    <alternativeName>
        <fullName evidence="9">Threonine-protein kinase PKM2</fullName>
        <ecNumber evidence="4">2.7.11.1</ecNumber>
    </alternativeName>
    <alternativeName>
        <fullName evidence="9">Tyrosine-protein kinase PKM2</fullName>
        <ecNumber evidence="4">2.7.10.2</ecNumber>
    </alternativeName>
</protein>